<organism>
    <name type="scientific">Dictyostelium discoideum</name>
    <name type="common">Social amoeba</name>
    <dbReference type="NCBI Taxonomy" id="44689"/>
    <lineage>
        <taxon>Eukaryota</taxon>
        <taxon>Amoebozoa</taxon>
        <taxon>Evosea</taxon>
        <taxon>Eumycetozoa</taxon>
        <taxon>Dictyostelia</taxon>
        <taxon>Dictyosteliales</taxon>
        <taxon>Dictyosteliaceae</taxon>
        <taxon>Dictyostelium</taxon>
    </lineage>
</organism>
<feature type="chain" id="PRO_0000367462" description="Probable myosin light chain kinase DDB_G0282429">
    <location>
        <begin position="1"/>
        <end position="312"/>
    </location>
</feature>
<feature type="domain" description="Protein kinase" evidence="1">
    <location>
        <begin position="38"/>
        <end position="290"/>
    </location>
</feature>
<feature type="region of interest" description="Disordered" evidence="3">
    <location>
        <begin position="1"/>
        <end position="28"/>
    </location>
</feature>
<feature type="compositionally biased region" description="Acidic residues" evidence="3">
    <location>
        <begin position="7"/>
        <end position="27"/>
    </location>
</feature>
<feature type="active site" description="Proton acceptor" evidence="1 2">
    <location>
        <position position="158"/>
    </location>
</feature>
<feature type="binding site" evidence="1">
    <location>
        <begin position="44"/>
        <end position="52"/>
    </location>
    <ligand>
        <name>ATP</name>
        <dbReference type="ChEBI" id="CHEBI:30616"/>
    </ligand>
</feature>
<feature type="binding site" evidence="1">
    <location>
        <position position="67"/>
    </location>
    <ligand>
        <name>ATP</name>
        <dbReference type="ChEBI" id="CHEBI:30616"/>
    </ligand>
</feature>
<sequence length="312" mass="35219">MDRMDSSDEEIDNISDDELQSGDEIEVESSNSPLRLNYILGNEIGRGAFSIVREATSRATGTKVAIKSINTRFIKNKLLMREIEIMKKVGDHPNILKLYEVYETTKHLHLVLELVTGGELFDKIVQRGEYSEQDASKIVRQIVSAVGHLHANGIAHRDLKPQNLLCAGEEGDDIRVADFGLSKIFGDGDYLETCCGSPEYVAPEVLECKPYDKACDLWSVGVITYVLLTGCFPFWDKNNAVLYEKIRNVDYGWPEGLEVSNEAKDLVSHLIEKNPEKRFTFEQCLIHPWVTGEGVSNARKIKPFQQQQPNNR</sequence>
<protein>
    <recommendedName>
        <fullName>Probable myosin light chain kinase DDB_G0282429</fullName>
        <ecNumber>2.7.11.18</ecNumber>
    </recommendedName>
</protein>
<keyword id="KW-0067">ATP-binding</keyword>
<keyword id="KW-0418">Kinase</keyword>
<keyword id="KW-0547">Nucleotide-binding</keyword>
<keyword id="KW-0597">Phosphoprotein</keyword>
<keyword id="KW-1185">Reference proteome</keyword>
<keyword id="KW-0723">Serine/threonine-protein kinase</keyword>
<keyword id="KW-0808">Transferase</keyword>
<accession>Q54SJ5</accession>
<name>MYLKC_DICDI</name>
<evidence type="ECO:0000255" key="1">
    <source>
        <dbReference type="PROSITE-ProRule" id="PRU00159"/>
    </source>
</evidence>
<evidence type="ECO:0000255" key="2">
    <source>
        <dbReference type="PROSITE-ProRule" id="PRU10027"/>
    </source>
</evidence>
<evidence type="ECO:0000256" key="3">
    <source>
        <dbReference type="SAM" id="MobiDB-lite"/>
    </source>
</evidence>
<evidence type="ECO:0000305" key="4"/>
<proteinExistence type="inferred from homology"/>
<comment type="function">
    <text>May phosphorylate a specific serine in the N-terminus of a myosin light chain.</text>
</comment>
<comment type="catalytic activity">
    <reaction>
        <text>L-seryl-[myosin light chain] + ATP = O-phospho-L-seryl-[myosin light chain] + ADP + H(+)</text>
        <dbReference type="Rhea" id="RHEA:22004"/>
        <dbReference type="Rhea" id="RHEA-COMP:13684"/>
        <dbReference type="Rhea" id="RHEA-COMP:13685"/>
        <dbReference type="ChEBI" id="CHEBI:15378"/>
        <dbReference type="ChEBI" id="CHEBI:29999"/>
        <dbReference type="ChEBI" id="CHEBI:30616"/>
        <dbReference type="ChEBI" id="CHEBI:83421"/>
        <dbReference type="ChEBI" id="CHEBI:456216"/>
        <dbReference type="EC" id="2.7.11.18"/>
    </reaction>
</comment>
<comment type="catalytic activity">
    <reaction>
        <text>L-threonyl-[myosin light chain] + ATP = O-phospho-L-threonyl-[myosin light chain] + ADP + H(+)</text>
        <dbReference type="Rhea" id="RHEA:53900"/>
        <dbReference type="Rhea" id="RHEA-COMP:13686"/>
        <dbReference type="Rhea" id="RHEA-COMP:13687"/>
        <dbReference type="ChEBI" id="CHEBI:15378"/>
        <dbReference type="ChEBI" id="CHEBI:30013"/>
        <dbReference type="ChEBI" id="CHEBI:30616"/>
        <dbReference type="ChEBI" id="CHEBI:61977"/>
        <dbReference type="ChEBI" id="CHEBI:456216"/>
        <dbReference type="EC" id="2.7.11.18"/>
    </reaction>
</comment>
<comment type="activity regulation">
    <text>Does not have a calmodulin-binding domain.</text>
</comment>
<comment type="similarity">
    <text evidence="4">Belongs to the protein kinase superfamily. CAMK Ser/Thr protein kinase family. CaMK subfamily.</text>
</comment>
<dbReference type="EC" id="2.7.11.18"/>
<dbReference type="EMBL" id="AAFI02000047">
    <property type="protein sequence ID" value="EAL66074.1"/>
    <property type="molecule type" value="Genomic_DNA"/>
</dbReference>
<dbReference type="RefSeq" id="XP_640044.1">
    <property type="nucleotide sequence ID" value="XM_634952.1"/>
</dbReference>
<dbReference type="SMR" id="Q54SJ5"/>
<dbReference type="STRING" id="44689.Q54SJ5"/>
<dbReference type="PaxDb" id="44689-DDB0216309"/>
<dbReference type="EnsemblProtists" id="EAL66074">
    <property type="protein sequence ID" value="EAL66074"/>
    <property type="gene ID" value="DDB_G0282429"/>
</dbReference>
<dbReference type="GeneID" id="8623571"/>
<dbReference type="KEGG" id="ddi:DDB_G0282429"/>
<dbReference type="dictyBase" id="DDB_G0282429"/>
<dbReference type="VEuPathDB" id="AmoebaDB:DDB_G0282429"/>
<dbReference type="eggNOG" id="KOG0032">
    <property type="taxonomic scope" value="Eukaryota"/>
</dbReference>
<dbReference type="HOGENOM" id="CLU_000288_63_0_1"/>
<dbReference type="InParanoid" id="Q54SJ5"/>
<dbReference type="OMA" id="YLETCCG"/>
<dbReference type="PhylomeDB" id="Q54SJ5"/>
<dbReference type="PRO" id="PR:Q54SJ5"/>
<dbReference type="Proteomes" id="UP000002195">
    <property type="component" value="Chromosome 3"/>
</dbReference>
<dbReference type="GO" id="GO:0005737">
    <property type="term" value="C:cytoplasm"/>
    <property type="evidence" value="ECO:0000318"/>
    <property type="project" value="GO_Central"/>
</dbReference>
<dbReference type="GO" id="GO:0005524">
    <property type="term" value="F:ATP binding"/>
    <property type="evidence" value="ECO:0007669"/>
    <property type="project" value="UniProtKB-KW"/>
</dbReference>
<dbReference type="GO" id="GO:0004687">
    <property type="term" value="F:myosin light chain kinase activity"/>
    <property type="evidence" value="ECO:0007669"/>
    <property type="project" value="UniProtKB-EC"/>
</dbReference>
<dbReference type="GO" id="GO:0004674">
    <property type="term" value="F:protein serine/threonine kinase activity"/>
    <property type="evidence" value="ECO:0000250"/>
    <property type="project" value="dictyBase"/>
</dbReference>
<dbReference type="GO" id="GO:0007165">
    <property type="term" value="P:signal transduction"/>
    <property type="evidence" value="ECO:0000318"/>
    <property type="project" value="GO_Central"/>
</dbReference>
<dbReference type="CDD" id="cd05117">
    <property type="entry name" value="STKc_CAMK"/>
    <property type="match status" value="1"/>
</dbReference>
<dbReference type="FunFam" id="1.10.510.10:FF:000868">
    <property type="entry name" value="Myosin light chain kinase, putative"/>
    <property type="match status" value="1"/>
</dbReference>
<dbReference type="FunFam" id="3.30.200.20:FF:000003">
    <property type="entry name" value="Non-specific serine/threonine protein kinase"/>
    <property type="match status" value="1"/>
</dbReference>
<dbReference type="Gene3D" id="1.10.510.10">
    <property type="entry name" value="Transferase(Phosphotransferase) domain 1"/>
    <property type="match status" value="1"/>
</dbReference>
<dbReference type="InterPro" id="IPR011009">
    <property type="entry name" value="Kinase-like_dom_sf"/>
</dbReference>
<dbReference type="InterPro" id="IPR000719">
    <property type="entry name" value="Prot_kinase_dom"/>
</dbReference>
<dbReference type="InterPro" id="IPR017441">
    <property type="entry name" value="Protein_kinase_ATP_BS"/>
</dbReference>
<dbReference type="InterPro" id="IPR008271">
    <property type="entry name" value="Ser/Thr_kinase_AS"/>
</dbReference>
<dbReference type="PANTHER" id="PTHR24347">
    <property type="entry name" value="SERINE/THREONINE-PROTEIN KINASE"/>
    <property type="match status" value="1"/>
</dbReference>
<dbReference type="Pfam" id="PF00069">
    <property type="entry name" value="Pkinase"/>
    <property type="match status" value="1"/>
</dbReference>
<dbReference type="PIRSF" id="PIRSF000654">
    <property type="entry name" value="Integrin-linked_kinase"/>
    <property type="match status" value="1"/>
</dbReference>
<dbReference type="SMART" id="SM00220">
    <property type="entry name" value="S_TKc"/>
    <property type="match status" value="1"/>
</dbReference>
<dbReference type="SUPFAM" id="SSF56112">
    <property type="entry name" value="Protein kinase-like (PK-like)"/>
    <property type="match status" value="1"/>
</dbReference>
<dbReference type="PROSITE" id="PS00107">
    <property type="entry name" value="PROTEIN_KINASE_ATP"/>
    <property type="match status" value="1"/>
</dbReference>
<dbReference type="PROSITE" id="PS50011">
    <property type="entry name" value="PROTEIN_KINASE_DOM"/>
    <property type="match status" value="1"/>
</dbReference>
<dbReference type="PROSITE" id="PS00108">
    <property type="entry name" value="PROTEIN_KINASE_ST"/>
    <property type="match status" value="1"/>
</dbReference>
<reference key="1">
    <citation type="journal article" date="2005" name="Nature">
        <title>The genome of the social amoeba Dictyostelium discoideum.</title>
        <authorList>
            <person name="Eichinger L."/>
            <person name="Pachebat J.A."/>
            <person name="Gloeckner G."/>
            <person name="Rajandream M.A."/>
            <person name="Sucgang R."/>
            <person name="Berriman M."/>
            <person name="Song J."/>
            <person name="Olsen R."/>
            <person name="Szafranski K."/>
            <person name="Xu Q."/>
            <person name="Tunggal B."/>
            <person name="Kummerfeld S."/>
            <person name="Madera M."/>
            <person name="Konfortov B.A."/>
            <person name="Rivero F."/>
            <person name="Bankier A.T."/>
            <person name="Lehmann R."/>
            <person name="Hamlin N."/>
            <person name="Davies R."/>
            <person name="Gaudet P."/>
            <person name="Fey P."/>
            <person name="Pilcher K."/>
            <person name="Chen G."/>
            <person name="Saunders D."/>
            <person name="Sodergren E.J."/>
            <person name="Davis P."/>
            <person name="Kerhornou A."/>
            <person name="Nie X."/>
            <person name="Hall N."/>
            <person name="Anjard C."/>
            <person name="Hemphill L."/>
            <person name="Bason N."/>
            <person name="Farbrother P."/>
            <person name="Desany B."/>
            <person name="Just E."/>
            <person name="Morio T."/>
            <person name="Rost R."/>
            <person name="Churcher C.M."/>
            <person name="Cooper J."/>
            <person name="Haydock S."/>
            <person name="van Driessche N."/>
            <person name="Cronin A."/>
            <person name="Goodhead I."/>
            <person name="Muzny D.M."/>
            <person name="Mourier T."/>
            <person name="Pain A."/>
            <person name="Lu M."/>
            <person name="Harper D."/>
            <person name="Lindsay R."/>
            <person name="Hauser H."/>
            <person name="James K.D."/>
            <person name="Quiles M."/>
            <person name="Madan Babu M."/>
            <person name="Saito T."/>
            <person name="Buchrieser C."/>
            <person name="Wardroper A."/>
            <person name="Felder M."/>
            <person name="Thangavelu M."/>
            <person name="Johnson D."/>
            <person name="Knights A."/>
            <person name="Loulseged H."/>
            <person name="Mungall K.L."/>
            <person name="Oliver K."/>
            <person name="Price C."/>
            <person name="Quail M.A."/>
            <person name="Urushihara H."/>
            <person name="Hernandez J."/>
            <person name="Rabbinowitsch E."/>
            <person name="Steffen D."/>
            <person name="Sanders M."/>
            <person name="Ma J."/>
            <person name="Kohara Y."/>
            <person name="Sharp S."/>
            <person name="Simmonds M.N."/>
            <person name="Spiegler S."/>
            <person name="Tivey A."/>
            <person name="Sugano S."/>
            <person name="White B."/>
            <person name="Walker D."/>
            <person name="Woodward J.R."/>
            <person name="Winckler T."/>
            <person name="Tanaka Y."/>
            <person name="Shaulsky G."/>
            <person name="Schleicher M."/>
            <person name="Weinstock G.M."/>
            <person name="Rosenthal A."/>
            <person name="Cox E.C."/>
            <person name="Chisholm R.L."/>
            <person name="Gibbs R.A."/>
            <person name="Loomis W.F."/>
            <person name="Platzer M."/>
            <person name="Kay R.R."/>
            <person name="Williams J.G."/>
            <person name="Dear P.H."/>
            <person name="Noegel A.A."/>
            <person name="Barrell B.G."/>
            <person name="Kuspa A."/>
        </authorList>
    </citation>
    <scope>NUCLEOTIDE SEQUENCE [LARGE SCALE GENOMIC DNA]</scope>
    <source>
        <strain>AX4</strain>
    </source>
</reference>
<gene>
    <name type="ORF">DDB_G0282429</name>
</gene>